<keyword id="KW-1005">Bacterial flagellum biogenesis</keyword>
<keyword id="KW-0143">Chaperone</keyword>
<keyword id="KW-0963">Cytoplasm</keyword>
<keyword id="KW-1185">Reference proteome</keyword>
<keyword id="KW-0810">Translation regulation</keyword>
<gene>
    <name evidence="1" type="primary">fliW</name>
    <name type="ordered locus">CHY_0974</name>
</gene>
<evidence type="ECO:0000255" key="1">
    <source>
        <dbReference type="HAMAP-Rule" id="MF_01185"/>
    </source>
</evidence>
<comment type="function">
    <text evidence="1">Acts as an anti-CsrA protein, binds CsrA and prevents it from repressing translation of its target genes, one of which is flagellin. Binds to flagellin and participates in the assembly of the flagellum.</text>
</comment>
<comment type="subunit">
    <text evidence="1">Interacts with translational regulator CsrA and flagellin(s).</text>
</comment>
<comment type="subcellular location">
    <subcellularLocation>
        <location evidence="1">Cytoplasm</location>
    </subcellularLocation>
</comment>
<comment type="similarity">
    <text evidence="1">Belongs to the FliW family.</text>
</comment>
<accession>Q3ADG3</accession>
<sequence length="154" mass="17650">MFILRLFSPAFGEIEADESQIFSFPEGLPGFSHLKKFLLIRHRDNSPFFFLIAIDEPEIYFILIEPSRLLADYHVELSCEQQGLLHLSEETPVLSLNIVRIPPEAKEMIINLKAPVVFNLQEKIARQIILDADYPVRYPIPLSKVKEKADAGTK</sequence>
<reference key="1">
    <citation type="journal article" date="2005" name="PLoS Genet.">
        <title>Life in hot carbon monoxide: the complete genome sequence of Carboxydothermus hydrogenoformans Z-2901.</title>
        <authorList>
            <person name="Wu M."/>
            <person name="Ren Q."/>
            <person name="Durkin A.S."/>
            <person name="Daugherty S.C."/>
            <person name="Brinkac L.M."/>
            <person name="Dodson R.J."/>
            <person name="Madupu R."/>
            <person name="Sullivan S.A."/>
            <person name="Kolonay J.F."/>
            <person name="Nelson W.C."/>
            <person name="Tallon L.J."/>
            <person name="Jones K.M."/>
            <person name="Ulrich L.E."/>
            <person name="Gonzalez J.M."/>
            <person name="Zhulin I.B."/>
            <person name="Robb F.T."/>
            <person name="Eisen J.A."/>
        </authorList>
    </citation>
    <scope>NUCLEOTIDE SEQUENCE [LARGE SCALE GENOMIC DNA]</scope>
    <source>
        <strain>ATCC BAA-161 / DSM 6008 / Z-2901</strain>
    </source>
</reference>
<organism>
    <name type="scientific">Carboxydothermus hydrogenoformans (strain ATCC BAA-161 / DSM 6008 / Z-2901)</name>
    <dbReference type="NCBI Taxonomy" id="246194"/>
    <lineage>
        <taxon>Bacteria</taxon>
        <taxon>Bacillati</taxon>
        <taxon>Bacillota</taxon>
        <taxon>Clostridia</taxon>
        <taxon>Thermoanaerobacterales</taxon>
        <taxon>Thermoanaerobacteraceae</taxon>
        <taxon>Carboxydothermus</taxon>
    </lineage>
</organism>
<dbReference type="EMBL" id="CP000141">
    <property type="protein sequence ID" value="ABB13787.1"/>
    <property type="molecule type" value="Genomic_DNA"/>
</dbReference>
<dbReference type="SMR" id="Q3ADG3"/>
<dbReference type="FunCoup" id="Q3ADG3">
    <property type="interactions" value="23"/>
</dbReference>
<dbReference type="STRING" id="246194.CHY_0974"/>
<dbReference type="KEGG" id="chy:CHY_0974"/>
<dbReference type="eggNOG" id="COG1699">
    <property type="taxonomic scope" value="Bacteria"/>
</dbReference>
<dbReference type="HOGENOM" id="CLU_112356_0_2_9"/>
<dbReference type="InParanoid" id="Q3ADG3"/>
<dbReference type="Proteomes" id="UP000002706">
    <property type="component" value="Chromosome"/>
</dbReference>
<dbReference type="GO" id="GO:0005737">
    <property type="term" value="C:cytoplasm"/>
    <property type="evidence" value="ECO:0007669"/>
    <property type="project" value="UniProtKB-SubCell"/>
</dbReference>
<dbReference type="GO" id="GO:0044780">
    <property type="term" value="P:bacterial-type flagellum assembly"/>
    <property type="evidence" value="ECO:0007669"/>
    <property type="project" value="UniProtKB-UniRule"/>
</dbReference>
<dbReference type="GO" id="GO:0006417">
    <property type="term" value="P:regulation of translation"/>
    <property type="evidence" value="ECO:0007669"/>
    <property type="project" value="UniProtKB-KW"/>
</dbReference>
<dbReference type="Gene3D" id="2.30.290.10">
    <property type="entry name" value="BH3618-like"/>
    <property type="match status" value="1"/>
</dbReference>
<dbReference type="HAMAP" id="MF_01185">
    <property type="entry name" value="FliW"/>
    <property type="match status" value="1"/>
</dbReference>
<dbReference type="InterPro" id="IPR003775">
    <property type="entry name" value="Flagellar_assembly_factor_FliW"/>
</dbReference>
<dbReference type="InterPro" id="IPR024046">
    <property type="entry name" value="Flagellar_assmbl_FliW_dom_sf"/>
</dbReference>
<dbReference type="PANTHER" id="PTHR39190">
    <property type="entry name" value="FLAGELLAR ASSEMBLY FACTOR FLIW"/>
    <property type="match status" value="1"/>
</dbReference>
<dbReference type="PANTHER" id="PTHR39190:SF1">
    <property type="entry name" value="FLAGELLAR ASSEMBLY FACTOR FLIW"/>
    <property type="match status" value="1"/>
</dbReference>
<dbReference type="Pfam" id="PF02623">
    <property type="entry name" value="FliW"/>
    <property type="match status" value="1"/>
</dbReference>
<dbReference type="SUPFAM" id="SSF141457">
    <property type="entry name" value="BH3618-like"/>
    <property type="match status" value="1"/>
</dbReference>
<proteinExistence type="inferred from homology"/>
<name>FLIW_CARHZ</name>
<protein>
    <recommendedName>
        <fullName evidence="1">Flagellar assembly factor FliW</fullName>
    </recommendedName>
</protein>
<feature type="chain" id="PRO_0000272977" description="Flagellar assembly factor FliW">
    <location>
        <begin position="1"/>
        <end position="154"/>
    </location>
</feature>